<proteinExistence type="inferred from homology"/>
<reference key="1">
    <citation type="submission" date="2009-06" db="EMBL/GenBank/DDBJ databases">
        <title>Complete sequence plasmid 2 of Ralstonia pickettii 12D.</title>
        <authorList>
            <consortium name="US DOE Joint Genome Institute"/>
            <person name="Lucas S."/>
            <person name="Copeland A."/>
            <person name="Lapidus A."/>
            <person name="Glavina del Rio T."/>
            <person name="Dalin E."/>
            <person name="Tice H."/>
            <person name="Bruce D."/>
            <person name="Goodwin L."/>
            <person name="Pitluck S."/>
            <person name="Sims D."/>
            <person name="Meincke L."/>
            <person name="Brettin T."/>
            <person name="Detter J.C."/>
            <person name="Han C."/>
            <person name="Larimer F."/>
            <person name="Land M."/>
            <person name="Hauser L."/>
            <person name="Kyrpides N."/>
            <person name="Ovchinnikova G."/>
            <person name="Marsh T."/>
            <person name="Richardson P."/>
        </authorList>
    </citation>
    <scope>NUCLEOTIDE SEQUENCE [LARGE SCALE GENOMIC DNA]</scope>
    <source>
        <strain>12D</strain>
    </source>
</reference>
<geneLocation type="plasmid">
    <name>pRp12D02</name>
</geneLocation>
<feature type="chain" id="PRO_0000406777" description="Flagellar transcriptional regulator FlhD">
    <location>
        <begin position="1"/>
        <end position="100"/>
    </location>
</feature>
<feature type="disulfide bond" description="Interchain" evidence="1">
    <location>
        <position position="65"/>
    </location>
</feature>
<comment type="function">
    <text evidence="1">Functions in complex with FlhC as a master transcriptional regulator that regulates transcription of several flagellar and non-flagellar operons by binding to their promoter region. Activates expression of class 2 flagellar genes, including fliA, which is a flagellum-specific sigma factor that turns on the class 3 genes. Also regulates genes whose products function in a variety of physiological pathways.</text>
</comment>
<comment type="subunit">
    <text evidence="1">Homodimer; disulfide-linked. Forms a heterohexamer composed of two FlhC and four FlhD subunits. Each FlhC binds a FlhD dimer, forming a heterotrimer, and a hexamer assembles by dimerization of two heterotrimers.</text>
</comment>
<comment type="subcellular location">
    <subcellularLocation>
        <location evidence="1">Cytoplasm</location>
    </subcellularLocation>
</comment>
<comment type="domain">
    <text evidence="1">The C-terminal region contains a putative helix-turn-helix (HTH) motif, suggesting that this region may bind DNA.</text>
</comment>
<comment type="similarity">
    <text evidence="1">Belongs to the FlhD family.</text>
</comment>
<keyword id="KW-0010">Activator</keyword>
<keyword id="KW-1005">Bacterial flagellum biogenesis</keyword>
<keyword id="KW-0963">Cytoplasm</keyword>
<keyword id="KW-1015">Disulfide bond</keyword>
<keyword id="KW-0238">DNA-binding</keyword>
<keyword id="KW-0614">Plasmid</keyword>
<keyword id="KW-0804">Transcription</keyword>
<keyword id="KW-0805">Transcription regulation</keyword>
<dbReference type="EMBL" id="CP001647">
    <property type="protein sequence ID" value="ACS66406.1"/>
    <property type="molecule type" value="Genomic_DNA"/>
</dbReference>
<dbReference type="SMR" id="C6BQP8"/>
<dbReference type="KEGG" id="rpf:Rpic12D_5178"/>
<dbReference type="PATRIC" id="fig|402626.5.peg.2716"/>
<dbReference type="HOGENOM" id="CLU_2303688_0_0_4"/>
<dbReference type="GO" id="GO:0005737">
    <property type="term" value="C:cytoplasm"/>
    <property type="evidence" value="ECO:0007669"/>
    <property type="project" value="UniProtKB-SubCell"/>
</dbReference>
<dbReference type="GO" id="GO:0003677">
    <property type="term" value="F:DNA binding"/>
    <property type="evidence" value="ECO:0007669"/>
    <property type="project" value="UniProtKB-UniRule"/>
</dbReference>
<dbReference type="GO" id="GO:0044780">
    <property type="term" value="P:bacterial-type flagellum assembly"/>
    <property type="evidence" value="ECO:0007669"/>
    <property type="project" value="InterPro"/>
</dbReference>
<dbReference type="GO" id="GO:0045893">
    <property type="term" value="P:positive regulation of DNA-templated transcription"/>
    <property type="evidence" value="ECO:0007669"/>
    <property type="project" value="InterPro"/>
</dbReference>
<dbReference type="GO" id="GO:1902208">
    <property type="term" value="P:regulation of bacterial-type flagellum assembly"/>
    <property type="evidence" value="ECO:0007669"/>
    <property type="project" value="UniProtKB-UniRule"/>
</dbReference>
<dbReference type="Gene3D" id="1.10.4000.10">
    <property type="entry name" value="Flagellar transcriptional activator FlhD"/>
    <property type="match status" value="1"/>
</dbReference>
<dbReference type="HAMAP" id="MF_00725">
    <property type="entry name" value="FlhD"/>
    <property type="match status" value="1"/>
</dbReference>
<dbReference type="InterPro" id="IPR023559">
    <property type="entry name" value="Flagellar_FlhD"/>
</dbReference>
<dbReference type="InterPro" id="IPR036194">
    <property type="entry name" value="FlhD_sf"/>
</dbReference>
<dbReference type="Pfam" id="PF05247">
    <property type="entry name" value="FlhD"/>
    <property type="match status" value="1"/>
</dbReference>
<dbReference type="SUPFAM" id="SSF63592">
    <property type="entry name" value="Flagellar transcriptional activator FlhD"/>
    <property type="match status" value="1"/>
</dbReference>
<name>FLHD_RALP1</name>
<evidence type="ECO:0000255" key="1">
    <source>
        <dbReference type="HAMAP-Rule" id="MF_00725"/>
    </source>
</evidence>
<accession>C6BQP8</accession>
<organism>
    <name type="scientific">Ralstonia pickettii (strain 12D)</name>
    <dbReference type="NCBI Taxonomy" id="428406"/>
    <lineage>
        <taxon>Bacteria</taxon>
        <taxon>Pseudomonadati</taxon>
        <taxon>Pseudomonadota</taxon>
        <taxon>Betaproteobacteria</taxon>
        <taxon>Burkholderiales</taxon>
        <taxon>Burkholderiaceae</taxon>
        <taxon>Ralstonia</taxon>
    </lineage>
</organism>
<protein>
    <recommendedName>
        <fullName evidence="1">Flagellar transcriptional regulator FlhD</fullName>
    </recommendedName>
</protein>
<gene>
    <name evidence="1" type="primary">flhD</name>
    <name type="ordered locus">Rpic12D_5178</name>
</gene>
<sequence length="100" mass="10680">MEATSLLSEIRSLNIAYLRLARRLLATDQALATTALGISQSMGEALLTLDEEACVRMAQTNLFLCRIHFDDRVLAALLAGPRLELLESPASAGKAAPAIA</sequence>